<evidence type="ECO:0000255" key="1">
    <source>
        <dbReference type="HAMAP-Rule" id="MF_00415"/>
    </source>
</evidence>
<comment type="function">
    <text evidence="1">Assembles around the rod to form the L-ring and probably protects the motor/basal body from shearing forces during rotation.</text>
</comment>
<comment type="subunit">
    <text evidence="1">The basal body constitutes a major portion of the flagellar organelle and consists of four rings (L,P,S, and M) mounted on a central rod.</text>
</comment>
<comment type="subcellular location">
    <subcellularLocation>
        <location evidence="1">Cell outer membrane</location>
        <topology evidence="1">Lipid-anchor</topology>
    </subcellularLocation>
    <subcellularLocation>
        <location evidence="1">Bacterial flagellum basal body</location>
    </subcellularLocation>
</comment>
<comment type="similarity">
    <text evidence="1">Belongs to the FlgH family.</text>
</comment>
<gene>
    <name evidence="1" type="primary">flgH</name>
    <name type="ordered locus">ECS88_1093</name>
</gene>
<keyword id="KW-0975">Bacterial flagellum</keyword>
<keyword id="KW-0998">Cell outer membrane</keyword>
<keyword id="KW-0449">Lipoprotein</keyword>
<keyword id="KW-0472">Membrane</keyword>
<keyword id="KW-0564">Palmitate</keyword>
<keyword id="KW-1185">Reference proteome</keyword>
<keyword id="KW-0732">Signal</keyword>
<accession>B7MJ67</accession>
<dbReference type="EMBL" id="CU928161">
    <property type="protein sequence ID" value="CAR02420.1"/>
    <property type="molecule type" value="Genomic_DNA"/>
</dbReference>
<dbReference type="RefSeq" id="WP_001295442.1">
    <property type="nucleotide sequence ID" value="NC_011742.1"/>
</dbReference>
<dbReference type="SMR" id="B7MJ67"/>
<dbReference type="GeneID" id="93776328"/>
<dbReference type="KEGG" id="ecz:ECS88_1093"/>
<dbReference type="HOGENOM" id="CLU_069313_0_0_6"/>
<dbReference type="Proteomes" id="UP000000747">
    <property type="component" value="Chromosome"/>
</dbReference>
<dbReference type="GO" id="GO:0009427">
    <property type="term" value="C:bacterial-type flagellum basal body, distal rod, L ring"/>
    <property type="evidence" value="ECO:0007669"/>
    <property type="project" value="InterPro"/>
</dbReference>
<dbReference type="GO" id="GO:0009279">
    <property type="term" value="C:cell outer membrane"/>
    <property type="evidence" value="ECO:0007669"/>
    <property type="project" value="UniProtKB-SubCell"/>
</dbReference>
<dbReference type="GO" id="GO:0003774">
    <property type="term" value="F:cytoskeletal motor activity"/>
    <property type="evidence" value="ECO:0007669"/>
    <property type="project" value="InterPro"/>
</dbReference>
<dbReference type="GO" id="GO:0071973">
    <property type="term" value="P:bacterial-type flagellum-dependent cell motility"/>
    <property type="evidence" value="ECO:0007669"/>
    <property type="project" value="InterPro"/>
</dbReference>
<dbReference type="HAMAP" id="MF_00415">
    <property type="entry name" value="FlgH"/>
    <property type="match status" value="1"/>
</dbReference>
<dbReference type="InterPro" id="IPR000527">
    <property type="entry name" value="Flag_Lring"/>
</dbReference>
<dbReference type="NCBIfam" id="NF001301">
    <property type="entry name" value="PRK00249.1-1"/>
    <property type="match status" value="1"/>
</dbReference>
<dbReference type="PANTHER" id="PTHR34933">
    <property type="entry name" value="FLAGELLAR L-RING PROTEIN"/>
    <property type="match status" value="1"/>
</dbReference>
<dbReference type="PANTHER" id="PTHR34933:SF3">
    <property type="entry name" value="FLAGELLAR L-RING PROTEIN"/>
    <property type="match status" value="1"/>
</dbReference>
<dbReference type="Pfam" id="PF02107">
    <property type="entry name" value="FlgH"/>
    <property type="match status" value="1"/>
</dbReference>
<dbReference type="PRINTS" id="PR01008">
    <property type="entry name" value="FLGLRINGFLGH"/>
</dbReference>
<dbReference type="PROSITE" id="PS51257">
    <property type="entry name" value="PROKAR_LIPOPROTEIN"/>
    <property type="match status" value="1"/>
</dbReference>
<proteinExistence type="inferred from homology"/>
<feature type="signal peptide" evidence="1">
    <location>
        <begin position="1"/>
        <end position="21"/>
    </location>
</feature>
<feature type="chain" id="PRO_1000123944" description="Flagellar L-ring protein">
    <location>
        <begin position="22"/>
        <end position="232"/>
    </location>
</feature>
<feature type="lipid moiety-binding region" description="N-palmitoyl cysteine" evidence="1">
    <location>
        <position position="22"/>
    </location>
</feature>
<feature type="lipid moiety-binding region" description="S-diacylglycerol cysteine" evidence="1">
    <location>
        <position position="22"/>
    </location>
</feature>
<name>FLGH_ECO45</name>
<organism>
    <name type="scientific">Escherichia coli O45:K1 (strain S88 / ExPEC)</name>
    <dbReference type="NCBI Taxonomy" id="585035"/>
    <lineage>
        <taxon>Bacteria</taxon>
        <taxon>Pseudomonadati</taxon>
        <taxon>Pseudomonadota</taxon>
        <taxon>Gammaproteobacteria</taxon>
        <taxon>Enterobacterales</taxon>
        <taxon>Enterobacteriaceae</taxon>
        <taxon>Escherichia</taxon>
    </lineage>
</organism>
<reference key="1">
    <citation type="journal article" date="2009" name="PLoS Genet.">
        <title>Organised genome dynamics in the Escherichia coli species results in highly diverse adaptive paths.</title>
        <authorList>
            <person name="Touchon M."/>
            <person name="Hoede C."/>
            <person name="Tenaillon O."/>
            <person name="Barbe V."/>
            <person name="Baeriswyl S."/>
            <person name="Bidet P."/>
            <person name="Bingen E."/>
            <person name="Bonacorsi S."/>
            <person name="Bouchier C."/>
            <person name="Bouvet O."/>
            <person name="Calteau A."/>
            <person name="Chiapello H."/>
            <person name="Clermont O."/>
            <person name="Cruveiller S."/>
            <person name="Danchin A."/>
            <person name="Diard M."/>
            <person name="Dossat C."/>
            <person name="Karoui M.E."/>
            <person name="Frapy E."/>
            <person name="Garry L."/>
            <person name="Ghigo J.M."/>
            <person name="Gilles A.M."/>
            <person name="Johnson J."/>
            <person name="Le Bouguenec C."/>
            <person name="Lescat M."/>
            <person name="Mangenot S."/>
            <person name="Martinez-Jehanne V."/>
            <person name="Matic I."/>
            <person name="Nassif X."/>
            <person name="Oztas S."/>
            <person name="Petit M.A."/>
            <person name="Pichon C."/>
            <person name="Rouy Z."/>
            <person name="Ruf C.S."/>
            <person name="Schneider D."/>
            <person name="Tourret J."/>
            <person name="Vacherie B."/>
            <person name="Vallenet D."/>
            <person name="Medigue C."/>
            <person name="Rocha E.P.C."/>
            <person name="Denamur E."/>
        </authorList>
    </citation>
    <scope>NUCLEOTIDE SEQUENCE [LARGE SCALE GENOMIC DNA]</scope>
    <source>
        <strain>S88 / ExPEC</strain>
    </source>
</reference>
<sequence length="232" mass="24615">MQKNAAHTYAISSLLVLSLTGCAWIPSTPLVQGATSAQPVPGPTPVANGSIFQSAQPINYGYQPLFEDRRPRNIGDTLTIVLQENVSASKSSSANASRDGKTNFGFDTVPRYLQGLFGNARADVEASGGNTFNGKGGANASNTFSGTLTVTVDQVLVNGNLHVVGEKQIAINQGTEFIRFSGVVNPRTISGSNTVPSTQVADARIEYVGNGYINEAQNMGWLQRFFLNLSPM</sequence>
<protein>
    <recommendedName>
        <fullName evidence="1">Flagellar L-ring protein</fullName>
    </recommendedName>
    <alternativeName>
        <fullName evidence="1">Basal body L-ring protein</fullName>
    </alternativeName>
</protein>